<comment type="function">
    <text evidence="5">Catalyzes the isomerization-deamination of galactosamine 6-phosphate to form tagatofuranose 6-phosphate and ammonium ion.</text>
</comment>
<comment type="catalytic activity">
    <reaction evidence="5">
        <text>D-galactosamine 6-phosphate + H2O = D-tagatopyranose 1-phosphate + NH4(+)</text>
        <dbReference type="Rhea" id="RHEA:47680"/>
        <dbReference type="ChEBI" id="CHEBI:15377"/>
        <dbReference type="ChEBI" id="CHEBI:28938"/>
        <dbReference type="ChEBI" id="CHEBI:71674"/>
        <dbReference type="ChEBI" id="CHEBI:138150"/>
    </reaction>
</comment>
<comment type="induction">
    <text evidence="2">Induced by growth on N-acetyl-D-galactosamine.</text>
</comment>
<comment type="disruption phenotype">
    <text evidence="2">Deletion mutant does not grow on N-acetyl-D-galactosamine or D-galactosamine.</text>
</comment>
<comment type="similarity">
    <text evidence="4">Belongs to the SIS family. AgaS subfamily.</text>
</comment>
<organism>
    <name type="scientific">Escherichia coli</name>
    <dbReference type="NCBI Taxonomy" id="562"/>
    <lineage>
        <taxon>Bacteria</taxon>
        <taxon>Pseudomonadati</taxon>
        <taxon>Pseudomonadota</taxon>
        <taxon>Gammaproteobacteria</taxon>
        <taxon>Enterobacterales</taxon>
        <taxon>Enterobacteriaceae</taxon>
        <taxon>Escherichia</taxon>
    </lineage>
</organism>
<keyword id="KW-0119">Carbohydrate metabolism</keyword>
<keyword id="KW-0378">Hydrolase</keyword>
<keyword id="KW-0677">Repeat</keyword>
<evidence type="ECO:0000255" key="1">
    <source>
        <dbReference type="PROSITE-ProRule" id="PRU00797"/>
    </source>
</evidence>
<evidence type="ECO:0000269" key="2">
    <source>
    </source>
</evidence>
<evidence type="ECO:0000303" key="3">
    <source>
    </source>
</evidence>
<evidence type="ECO:0000305" key="4"/>
<evidence type="ECO:0000305" key="5">
    <source>
    </source>
</evidence>
<protein>
    <recommendedName>
        <fullName evidence="4">D-galactosamine-6-phosphate deaminase AgaS</fullName>
        <ecNumber evidence="5">3.5.99.-</ecNumber>
    </recommendedName>
    <alternativeName>
        <fullName evidence="3">Gam-6-P deaminase/isomerase</fullName>
    </alternativeName>
</protein>
<name>AGAS_ECOLX</name>
<sequence>MPENYTPAAAATGTWTEEEIRHQPRAWIRSLTNIDALRSALNNFLEPLLRKENLRIILTGAGTSAFIGDIIAPWLASHTGKNFSAVPTTDLVTNPMDYLNPAHPLLLISFGRSGNSPESVAAVELANQFVPECYHLPITCNEAGALYQNAINSDNAFALLMPAETHDRGFAMTSSITTMMASCLAVFAPETINSQTFRDVADRCQAILTTLGDFSEGVFGYAPWKRIVYLGSGGLQGAARESALKVLELTAGKLAAFYDSPTGFRHGPKSLVDDETLVVVFVSSHPYTRQYDLDLLAELRRDNQAMRVIAIAAESSDIVAAGPHIILPPSRHFIDVEQAFCFLMYAQTFALMQSLHMGNTPDTPSASGTVNRVVQGVIIHPWQA</sequence>
<proteinExistence type="evidence at protein level"/>
<gene>
    <name evidence="3" type="primary">agaS</name>
</gene>
<reference key="1">
    <citation type="journal article" date="2000" name="Mol. Microbiol.">
        <title>Pathways for the utilization of N-acetyl-galactosamine and galactosamine in Escherichia coli.</title>
        <authorList>
            <person name="Brinkkoetter A."/>
            <person name="Kloess H."/>
            <person name="Alpert C.-A."/>
            <person name="Lengeler J.W."/>
        </authorList>
    </citation>
    <scope>NUCLEOTIDE SEQUENCE [GENOMIC DNA]</scope>
    <scope>PUTATIVE FUNCTION</scope>
    <source>
        <strain>C</strain>
    </source>
</reference>
<reference key="2">
    <citation type="journal article" date="2013" name="BMC Microbiol.">
        <title>Genetic analysis of the roles of agaA, agaI, and agaS genes in the N-acetyl-D-galactosamine and D-galactosamine catabolic pathways in Escherichia coli strains O157:H7 and C.</title>
        <authorList>
            <person name="Hu Z."/>
            <person name="Patel I.R."/>
            <person name="Mukherjee A."/>
        </authorList>
    </citation>
    <scope>FUNCTION</scope>
    <scope>CATALYTIC ACTIVITY</scope>
    <scope>INDUCTION</scope>
    <scope>DISRUPTION PHENOTYPE</scope>
    <source>
        <strain>C</strain>
    </source>
</reference>
<dbReference type="EC" id="3.5.99.-" evidence="5"/>
<dbReference type="EMBL" id="AF228498">
    <property type="protein sequence ID" value="AAF81088.1"/>
    <property type="molecule type" value="Genomic_DNA"/>
</dbReference>
<dbReference type="SMR" id="Q9KIP9"/>
<dbReference type="STRING" id="585034.ECIAI1_3286"/>
<dbReference type="eggNOG" id="COG2222">
    <property type="taxonomic scope" value="Bacteria"/>
</dbReference>
<dbReference type="GO" id="GO:0005886">
    <property type="term" value="C:plasma membrane"/>
    <property type="evidence" value="ECO:0007669"/>
    <property type="project" value="TreeGrafter"/>
</dbReference>
<dbReference type="GO" id="GO:0097367">
    <property type="term" value="F:carbohydrate derivative binding"/>
    <property type="evidence" value="ECO:0007669"/>
    <property type="project" value="InterPro"/>
</dbReference>
<dbReference type="GO" id="GO:0016787">
    <property type="term" value="F:hydrolase activity"/>
    <property type="evidence" value="ECO:0007669"/>
    <property type="project" value="UniProtKB-KW"/>
</dbReference>
<dbReference type="GO" id="GO:0016853">
    <property type="term" value="F:isomerase activity"/>
    <property type="evidence" value="ECO:0007669"/>
    <property type="project" value="InterPro"/>
</dbReference>
<dbReference type="GO" id="GO:1901135">
    <property type="term" value="P:carbohydrate derivative metabolic process"/>
    <property type="evidence" value="ECO:0007669"/>
    <property type="project" value="InterPro"/>
</dbReference>
<dbReference type="GO" id="GO:0009401">
    <property type="term" value="P:phosphoenolpyruvate-dependent sugar phosphotransferase system"/>
    <property type="evidence" value="ECO:0007669"/>
    <property type="project" value="TreeGrafter"/>
</dbReference>
<dbReference type="CDD" id="cd05010">
    <property type="entry name" value="SIS_AgaS_like"/>
    <property type="match status" value="1"/>
</dbReference>
<dbReference type="CDD" id="cd05008">
    <property type="entry name" value="SIS_GlmS_GlmD_1"/>
    <property type="match status" value="1"/>
</dbReference>
<dbReference type="Gene3D" id="3.40.50.10490">
    <property type="entry name" value="Glucose-6-phosphate isomerase like protein, domain 1"/>
    <property type="match status" value="2"/>
</dbReference>
<dbReference type="InterPro" id="IPR050303">
    <property type="entry name" value="GatZ_KbaZ_carbometab"/>
</dbReference>
<dbReference type="InterPro" id="IPR035466">
    <property type="entry name" value="GlmS/AgaS_SIS"/>
</dbReference>
<dbReference type="InterPro" id="IPR035464">
    <property type="entry name" value="SIS_AgaS"/>
</dbReference>
<dbReference type="InterPro" id="IPR001347">
    <property type="entry name" value="SIS_dom"/>
</dbReference>
<dbReference type="InterPro" id="IPR046348">
    <property type="entry name" value="SIS_dom_sf"/>
</dbReference>
<dbReference type="InterPro" id="IPR014180">
    <property type="entry name" value="Sugar_isomerase_AgaS"/>
</dbReference>
<dbReference type="NCBIfam" id="TIGR02815">
    <property type="entry name" value="agaS_fam"/>
    <property type="match status" value="1"/>
</dbReference>
<dbReference type="PANTHER" id="PTHR32502:SF3">
    <property type="entry name" value="D-GALACTOSAMINE-6-PHOSPHATE DEAMINASE AGAS-RELATED"/>
    <property type="match status" value="1"/>
</dbReference>
<dbReference type="PANTHER" id="PTHR32502">
    <property type="entry name" value="N-ACETYLGALACTOSAMINE PERMEASE II COMPONENT-RELATED"/>
    <property type="match status" value="1"/>
</dbReference>
<dbReference type="Pfam" id="PF01380">
    <property type="entry name" value="SIS"/>
    <property type="match status" value="2"/>
</dbReference>
<dbReference type="SUPFAM" id="SSF53697">
    <property type="entry name" value="SIS domain"/>
    <property type="match status" value="1"/>
</dbReference>
<dbReference type="PROSITE" id="PS51464">
    <property type="entry name" value="SIS"/>
    <property type="match status" value="2"/>
</dbReference>
<accession>Q9KIP9</accession>
<feature type="chain" id="PRO_0000355317" description="D-galactosamine-6-phosphate deaminase AgaS">
    <location>
        <begin position="1"/>
        <end position="384"/>
    </location>
</feature>
<feature type="domain" description="SIS 1" evidence="1">
    <location>
        <begin position="45"/>
        <end position="197"/>
    </location>
</feature>
<feature type="domain" description="SIS 2" evidence="1">
    <location>
        <begin position="215"/>
        <end position="364"/>
    </location>
</feature>